<sequence length="392" mass="44614">MSLTKKIKNEKSLKQEKQTDQLKSNLRNNNNNINNKSKPKDQNLNTLHYIKTHLKEELFFIFCVGGIYIFYLLYGLVQEQLNVTKFGTEKKVFGFTAFLLALQCFFNMVSAWLVSLVNKEQKDNTPFMKYGFVSMLLVISTFLSNQSIRYISYPTQVLAKSCKPIPVIFMGLLLFKKKYPFLKYIVVIVISLGISLFMLPKATSKKNIQFEGHDHLFGNFILFVSLMMDGVMGPFQDNLVRQYKPSATSMMLNTNIWNLGLFSIMAFARGEVSQAIDFILEYPEVIKLILAFCITSAIGQQFIFLTTNKFGSLNCSTITTTRKFFSILVSIFYFGHSLDNLQWAAICMVFGGLILDLYISYSNKKKGVVLSPIAAPVKHPTATTPLENKKSL</sequence>
<reference key="1">
    <citation type="journal article" date="2005" name="Nature">
        <title>The genome of the social amoeba Dictyostelium discoideum.</title>
        <authorList>
            <person name="Eichinger L."/>
            <person name="Pachebat J.A."/>
            <person name="Gloeckner G."/>
            <person name="Rajandream M.A."/>
            <person name="Sucgang R."/>
            <person name="Berriman M."/>
            <person name="Song J."/>
            <person name="Olsen R."/>
            <person name="Szafranski K."/>
            <person name="Xu Q."/>
            <person name="Tunggal B."/>
            <person name="Kummerfeld S."/>
            <person name="Madera M."/>
            <person name="Konfortov B.A."/>
            <person name="Rivero F."/>
            <person name="Bankier A.T."/>
            <person name="Lehmann R."/>
            <person name="Hamlin N."/>
            <person name="Davies R."/>
            <person name="Gaudet P."/>
            <person name="Fey P."/>
            <person name="Pilcher K."/>
            <person name="Chen G."/>
            <person name="Saunders D."/>
            <person name="Sodergren E.J."/>
            <person name="Davis P."/>
            <person name="Kerhornou A."/>
            <person name="Nie X."/>
            <person name="Hall N."/>
            <person name="Anjard C."/>
            <person name="Hemphill L."/>
            <person name="Bason N."/>
            <person name="Farbrother P."/>
            <person name="Desany B."/>
            <person name="Just E."/>
            <person name="Morio T."/>
            <person name="Rost R."/>
            <person name="Churcher C.M."/>
            <person name="Cooper J."/>
            <person name="Haydock S."/>
            <person name="van Driessche N."/>
            <person name="Cronin A."/>
            <person name="Goodhead I."/>
            <person name="Muzny D.M."/>
            <person name="Mourier T."/>
            <person name="Pain A."/>
            <person name="Lu M."/>
            <person name="Harper D."/>
            <person name="Lindsay R."/>
            <person name="Hauser H."/>
            <person name="James K.D."/>
            <person name="Quiles M."/>
            <person name="Madan Babu M."/>
            <person name="Saito T."/>
            <person name="Buchrieser C."/>
            <person name="Wardroper A."/>
            <person name="Felder M."/>
            <person name="Thangavelu M."/>
            <person name="Johnson D."/>
            <person name="Knights A."/>
            <person name="Loulseged H."/>
            <person name="Mungall K.L."/>
            <person name="Oliver K."/>
            <person name="Price C."/>
            <person name="Quail M.A."/>
            <person name="Urushihara H."/>
            <person name="Hernandez J."/>
            <person name="Rabbinowitsch E."/>
            <person name="Steffen D."/>
            <person name="Sanders M."/>
            <person name="Ma J."/>
            <person name="Kohara Y."/>
            <person name="Sharp S."/>
            <person name="Simmonds M.N."/>
            <person name="Spiegler S."/>
            <person name="Tivey A."/>
            <person name="Sugano S."/>
            <person name="White B."/>
            <person name="Walker D."/>
            <person name="Woodward J.R."/>
            <person name="Winckler T."/>
            <person name="Tanaka Y."/>
            <person name="Shaulsky G."/>
            <person name="Schleicher M."/>
            <person name="Weinstock G.M."/>
            <person name="Rosenthal A."/>
            <person name="Cox E.C."/>
            <person name="Chisholm R.L."/>
            <person name="Gibbs R.A."/>
            <person name="Loomis W.F."/>
            <person name="Platzer M."/>
            <person name="Kay R.R."/>
            <person name="Williams J.G."/>
            <person name="Dear P.H."/>
            <person name="Noegel A.A."/>
            <person name="Barrell B.G."/>
            <person name="Kuspa A."/>
        </authorList>
    </citation>
    <scope>NUCLEOTIDE SEQUENCE [LARGE SCALE GENOMIC DNA]</scope>
    <source>
        <strain>AX4</strain>
    </source>
</reference>
<dbReference type="EMBL" id="AAFI02000126">
    <property type="protein sequence ID" value="EAL62988.1"/>
    <property type="status" value="ALT_SEQ"/>
    <property type="molecule type" value="Genomic_DNA"/>
</dbReference>
<dbReference type="EMBL" id="AAFI02000126">
    <property type="protein sequence ID" value="EAL62987.1"/>
    <property type="status" value="ALT_SEQ"/>
    <property type="molecule type" value="Genomic_DNA"/>
</dbReference>
<dbReference type="RefSeq" id="XP_636492.1">
    <property type="nucleotide sequence ID" value="XM_631400.1"/>
</dbReference>
<dbReference type="RefSeq" id="XP_636493.1">
    <property type="nucleotide sequence ID" value="XM_631401.1"/>
</dbReference>
<dbReference type="SMR" id="Q54I86"/>
<dbReference type="FunCoup" id="Q54I86">
    <property type="interactions" value="685"/>
</dbReference>
<dbReference type="STRING" id="44689.Q54I86"/>
<dbReference type="PaxDb" id="44689-DDB0188178"/>
<dbReference type="EnsemblProtists" id="EAL62987">
    <property type="protein sequence ID" value="EAL62987"/>
    <property type="gene ID" value="DDB_G0288927"/>
</dbReference>
<dbReference type="EnsemblProtists" id="EAL62988">
    <property type="protein sequence ID" value="EAL62988"/>
    <property type="gene ID" value="DDB_G0288929"/>
</dbReference>
<dbReference type="GeneID" id="8626876"/>
<dbReference type="KEGG" id="ddi:DDB_G0288927"/>
<dbReference type="KEGG" id="ddi:DDB_G0288929"/>
<dbReference type="dictyBase" id="DDB_G0288929"/>
<dbReference type="VEuPathDB" id="AmoebaDB:DDB_G0288927"/>
<dbReference type="VEuPathDB" id="AmoebaDB:DDB_G0288929"/>
<dbReference type="eggNOG" id="KOG1580">
    <property type="taxonomic scope" value="Eukaryota"/>
</dbReference>
<dbReference type="InParanoid" id="Q54I86"/>
<dbReference type="PhylomeDB" id="Q54I86"/>
<dbReference type="PRO" id="PR:Q54I86"/>
<dbReference type="Proteomes" id="UP000002195">
    <property type="component" value="Chromosome 5"/>
</dbReference>
<dbReference type="GO" id="GO:0005789">
    <property type="term" value="C:endoplasmic reticulum membrane"/>
    <property type="evidence" value="ECO:0000318"/>
    <property type="project" value="GO_Central"/>
</dbReference>
<dbReference type="GO" id="GO:0000139">
    <property type="term" value="C:Golgi membrane"/>
    <property type="evidence" value="ECO:0000318"/>
    <property type="project" value="GO_Central"/>
</dbReference>
<dbReference type="GO" id="GO:0005459">
    <property type="term" value="F:UDP-galactose transmembrane transporter activity"/>
    <property type="evidence" value="ECO:0000318"/>
    <property type="project" value="GO_Central"/>
</dbReference>
<dbReference type="GO" id="GO:0005460">
    <property type="term" value="F:UDP-glucose transmembrane transporter activity"/>
    <property type="evidence" value="ECO:0000318"/>
    <property type="project" value="GO_Central"/>
</dbReference>
<dbReference type="GO" id="GO:0072334">
    <property type="term" value="P:UDP-galactose transmembrane transport"/>
    <property type="evidence" value="ECO:0000318"/>
    <property type="project" value="GO_Central"/>
</dbReference>
<dbReference type="InterPro" id="IPR013657">
    <property type="entry name" value="SCL35B1-4/HUT1"/>
</dbReference>
<dbReference type="PANTHER" id="PTHR10778">
    <property type="entry name" value="SOLUTE CARRIER FAMILY 35 MEMBER B"/>
    <property type="match status" value="1"/>
</dbReference>
<dbReference type="PANTHER" id="PTHR10778:SF10">
    <property type="entry name" value="SOLUTE CARRIER FAMILY 35 MEMBER B1"/>
    <property type="match status" value="1"/>
</dbReference>
<dbReference type="Pfam" id="PF08449">
    <property type="entry name" value="UAA"/>
    <property type="match status" value="1"/>
</dbReference>
<dbReference type="SUPFAM" id="SSF103481">
    <property type="entry name" value="Multidrug resistance efflux transporter EmrE"/>
    <property type="match status" value="1"/>
</dbReference>
<protein>
    <recommendedName>
        <fullName>Solute carrier family 35 member B1</fullName>
    </recommendedName>
</protein>
<gene>
    <name type="primary">slc35b1</name>
    <name type="ORF">DDB_G0288929</name>
</gene>
<organism>
    <name type="scientific">Dictyostelium discoideum</name>
    <name type="common">Social amoeba</name>
    <dbReference type="NCBI Taxonomy" id="44689"/>
    <lineage>
        <taxon>Eukaryota</taxon>
        <taxon>Amoebozoa</taxon>
        <taxon>Evosea</taxon>
        <taxon>Eumycetozoa</taxon>
        <taxon>Dictyostelia</taxon>
        <taxon>Dictyosteliales</taxon>
        <taxon>Dictyosteliaceae</taxon>
        <taxon>Dictyostelium</taxon>
    </lineage>
</organism>
<name>S35B1_DICDI</name>
<proteinExistence type="inferred from homology"/>
<evidence type="ECO:0000250" key="1"/>
<evidence type="ECO:0000255" key="2"/>
<evidence type="ECO:0000256" key="3">
    <source>
        <dbReference type="SAM" id="MobiDB-lite"/>
    </source>
</evidence>
<evidence type="ECO:0000305" key="4"/>
<accession>Q54I86</accession>
<accession>Q54I87</accession>
<keyword id="KW-0256">Endoplasmic reticulum</keyword>
<keyword id="KW-0472">Membrane</keyword>
<keyword id="KW-1185">Reference proteome</keyword>
<keyword id="KW-0762">Sugar transport</keyword>
<keyword id="KW-0812">Transmembrane</keyword>
<keyword id="KW-1133">Transmembrane helix</keyword>
<keyword id="KW-0813">Transport</keyword>
<feature type="chain" id="PRO_0000330911" description="Solute carrier family 35 member B1">
    <location>
        <begin position="1"/>
        <end position="392"/>
    </location>
</feature>
<feature type="transmembrane region" description="Helical" evidence="2">
    <location>
        <begin position="57"/>
        <end position="77"/>
    </location>
</feature>
<feature type="transmembrane region" description="Helical" evidence="2">
    <location>
        <begin position="97"/>
        <end position="117"/>
    </location>
</feature>
<feature type="transmembrane region" description="Helical" evidence="2">
    <location>
        <begin position="124"/>
        <end position="144"/>
    </location>
</feature>
<feature type="transmembrane region" description="Helical" evidence="2">
    <location>
        <begin position="155"/>
        <end position="175"/>
    </location>
</feature>
<feature type="transmembrane region" description="Helical" evidence="2">
    <location>
        <begin position="179"/>
        <end position="199"/>
    </location>
</feature>
<feature type="transmembrane region" description="Helical" evidence="2">
    <location>
        <begin position="215"/>
        <end position="235"/>
    </location>
</feature>
<feature type="transmembrane region" description="Helical" evidence="2">
    <location>
        <begin position="247"/>
        <end position="267"/>
    </location>
</feature>
<feature type="transmembrane region" description="Helical" evidence="2">
    <location>
        <begin position="285"/>
        <end position="305"/>
    </location>
</feature>
<feature type="transmembrane region" description="Helical" evidence="2">
    <location>
        <begin position="341"/>
        <end position="361"/>
    </location>
</feature>
<feature type="region of interest" description="Disordered" evidence="3">
    <location>
        <begin position="1"/>
        <end position="40"/>
    </location>
</feature>
<feature type="short sequence motif" description="Di-lysine motif">
    <location>
        <begin position="389"/>
        <end position="392"/>
    </location>
</feature>
<feature type="compositionally biased region" description="Basic and acidic residues" evidence="3">
    <location>
        <begin position="7"/>
        <end position="20"/>
    </location>
</feature>
<feature type="compositionally biased region" description="Low complexity" evidence="3">
    <location>
        <begin position="25"/>
        <end position="35"/>
    </location>
</feature>
<comment type="function">
    <text evidence="1">Probable sugar transporter.</text>
</comment>
<comment type="subcellular location">
    <subcellularLocation>
        <location evidence="4">Endoplasmic reticulum membrane</location>
        <topology evidence="4">Multi-pass membrane protein</topology>
    </subcellularLocation>
</comment>
<comment type="domain">
    <text evidence="1">The di-lysine motif confers endoplasmic reticulum localization for type I membrane proteins.</text>
</comment>
<comment type="similarity">
    <text evidence="4">Belongs to the nucleotide-sugar transporter family. SLC35B subfamily.</text>
</comment>
<comment type="sequence caution" evidence="4">
    <conflict type="erroneous gene model prediction">
        <sequence resource="EMBL-CDS" id="EAL62987"/>
    </conflict>
</comment>
<comment type="sequence caution" evidence="4">
    <conflict type="erroneous gene model prediction">
        <sequence resource="EMBL-CDS" id="EAL62988"/>
    </conflict>
</comment>